<dbReference type="EC" id="6.1.1.21" evidence="1"/>
<dbReference type="EMBL" id="AM884176">
    <property type="protein sequence ID" value="CAP04243.1"/>
    <property type="molecule type" value="Genomic_DNA"/>
</dbReference>
<dbReference type="RefSeq" id="WP_009873887.1">
    <property type="nucleotide sequence ID" value="NC_010287.1"/>
</dbReference>
<dbReference type="RefSeq" id="YP_001654876.1">
    <property type="nucleotide sequence ID" value="NC_010287.1"/>
</dbReference>
<dbReference type="SMR" id="B0B8B7"/>
<dbReference type="KEGG" id="ctb:CTL0805"/>
<dbReference type="PATRIC" id="fig|471472.4.peg.862"/>
<dbReference type="HOGENOM" id="CLU_025113_1_1_0"/>
<dbReference type="Proteomes" id="UP001154402">
    <property type="component" value="Chromosome"/>
</dbReference>
<dbReference type="GO" id="GO:0005737">
    <property type="term" value="C:cytoplasm"/>
    <property type="evidence" value="ECO:0007669"/>
    <property type="project" value="UniProtKB-SubCell"/>
</dbReference>
<dbReference type="GO" id="GO:0005524">
    <property type="term" value="F:ATP binding"/>
    <property type="evidence" value="ECO:0007669"/>
    <property type="project" value="UniProtKB-UniRule"/>
</dbReference>
<dbReference type="GO" id="GO:0004821">
    <property type="term" value="F:histidine-tRNA ligase activity"/>
    <property type="evidence" value="ECO:0007669"/>
    <property type="project" value="UniProtKB-UniRule"/>
</dbReference>
<dbReference type="GO" id="GO:0006427">
    <property type="term" value="P:histidyl-tRNA aminoacylation"/>
    <property type="evidence" value="ECO:0007669"/>
    <property type="project" value="UniProtKB-UniRule"/>
</dbReference>
<dbReference type="CDD" id="cd00773">
    <property type="entry name" value="HisRS-like_core"/>
    <property type="match status" value="1"/>
</dbReference>
<dbReference type="FunFam" id="3.30.930.10:FF:000166">
    <property type="entry name" value="Histidine--tRNA ligase"/>
    <property type="match status" value="1"/>
</dbReference>
<dbReference type="Gene3D" id="3.40.50.800">
    <property type="entry name" value="Anticodon-binding domain"/>
    <property type="match status" value="1"/>
</dbReference>
<dbReference type="Gene3D" id="3.30.930.10">
    <property type="entry name" value="Bira Bifunctional Protein, Domain 2"/>
    <property type="match status" value="1"/>
</dbReference>
<dbReference type="HAMAP" id="MF_00127">
    <property type="entry name" value="His_tRNA_synth"/>
    <property type="match status" value="1"/>
</dbReference>
<dbReference type="InterPro" id="IPR006195">
    <property type="entry name" value="aa-tRNA-synth_II"/>
</dbReference>
<dbReference type="InterPro" id="IPR045864">
    <property type="entry name" value="aa-tRNA-synth_II/BPL/LPL"/>
</dbReference>
<dbReference type="InterPro" id="IPR004154">
    <property type="entry name" value="Anticodon-bd"/>
</dbReference>
<dbReference type="InterPro" id="IPR036621">
    <property type="entry name" value="Anticodon-bd_dom_sf"/>
</dbReference>
<dbReference type="InterPro" id="IPR015807">
    <property type="entry name" value="His-tRNA-ligase"/>
</dbReference>
<dbReference type="InterPro" id="IPR041715">
    <property type="entry name" value="HisRS-like_core"/>
</dbReference>
<dbReference type="InterPro" id="IPR004516">
    <property type="entry name" value="HisRS/HisZ"/>
</dbReference>
<dbReference type="NCBIfam" id="TIGR00442">
    <property type="entry name" value="hisS"/>
    <property type="match status" value="1"/>
</dbReference>
<dbReference type="PANTHER" id="PTHR43707:SF1">
    <property type="entry name" value="HISTIDINE--TRNA LIGASE, MITOCHONDRIAL-RELATED"/>
    <property type="match status" value="1"/>
</dbReference>
<dbReference type="PANTHER" id="PTHR43707">
    <property type="entry name" value="HISTIDYL-TRNA SYNTHETASE"/>
    <property type="match status" value="1"/>
</dbReference>
<dbReference type="Pfam" id="PF03129">
    <property type="entry name" value="HGTP_anticodon"/>
    <property type="match status" value="1"/>
</dbReference>
<dbReference type="Pfam" id="PF13393">
    <property type="entry name" value="tRNA-synt_His"/>
    <property type="match status" value="1"/>
</dbReference>
<dbReference type="PIRSF" id="PIRSF001549">
    <property type="entry name" value="His-tRNA_synth"/>
    <property type="match status" value="1"/>
</dbReference>
<dbReference type="SUPFAM" id="SSF52954">
    <property type="entry name" value="Class II aaRS ABD-related"/>
    <property type="match status" value="1"/>
</dbReference>
<dbReference type="SUPFAM" id="SSF55681">
    <property type="entry name" value="Class II aaRS and biotin synthetases"/>
    <property type="match status" value="1"/>
</dbReference>
<dbReference type="PROSITE" id="PS50862">
    <property type="entry name" value="AA_TRNA_LIGASE_II"/>
    <property type="match status" value="1"/>
</dbReference>
<comment type="catalytic activity">
    <reaction evidence="1">
        <text>tRNA(His) + L-histidine + ATP = L-histidyl-tRNA(His) + AMP + diphosphate + H(+)</text>
        <dbReference type="Rhea" id="RHEA:17313"/>
        <dbReference type="Rhea" id="RHEA-COMP:9665"/>
        <dbReference type="Rhea" id="RHEA-COMP:9689"/>
        <dbReference type="ChEBI" id="CHEBI:15378"/>
        <dbReference type="ChEBI" id="CHEBI:30616"/>
        <dbReference type="ChEBI" id="CHEBI:33019"/>
        <dbReference type="ChEBI" id="CHEBI:57595"/>
        <dbReference type="ChEBI" id="CHEBI:78442"/>
        <dbReference type="ChEBI" id="CHEBI:78527"/>
        <dbReference type="ChEBI" id="CHEBI:456215"/>
        <dbReference type="EC" id="6.1.1.21"/>
    </reaction>
</comment>
<comment type="subunit">
    <text evidence="1">Homodimer.</text>
</comment>
<comment type="subcellular location">
    <subcellularLocation>
        <location evidence="1">Cytoplasm</location>
    </subcellularLocation>
</comment>
<comment type="similarity">
    <text evidence="1">Belongs to the class-II aminoacyl-tRNA synthetase family.</text>
</comment>
<keyword id="KW-0030">Aminoacyl-tRNA synthetase</keyword>
<keyword id="KW-0067">ATP-binding</keyword>
<keyword id="KW-0963">Cytoplasm</keyword>
<keyword id="KW-0436">Ligase</keyword>
<keyword id="KW-0547">Nucleotide-binding</keyword>
<keyword id="KW-0648">Protein biosynthesis</keyword>
<accession>B0B8B7</accession>
<proteinExistence type="inferred from homology"/>
<reference key="1">
    <citation type="journal article" date="2008" name="Genome Res.">
        <title>Chlamydia trachomatis: genome sequence analysis of lymphogranuloma venereum isolates.</title>
        <authorList>
            <person name="Thomson N.R."/>
            <person name="Holden M.T.G."/>
            <person name="Carder C."/>
            <person name="Lennard N."/>
            <person name="Lockey S.J."/>
            <person name="Marsh P."/>
            <person name="Skipp P."/>
            <person name="O'Connor C.D."/>
            <person name="Goodhead I."/>
            <person name="Norbertzcak H."/>
            <person name="Harris B."/>
            <person name="Ormond D."/>
            <person name="Rance R."/>
            <person name="Quail M.A."/>
            <person name="Parkhill J."/>
            <person name="Stephens R.S."/>
            <person name="Clarke I.N."/>
        </authorList>
    </citation>
    <scope>NUCLEOTIDE SEQUENCE [LARGE SCALE GENOMIC DNA]</scope>
    <source>
        <strain>ATCC VR-902B / DSM 19102 / 434/Bu</strain>
    </source>
</reference>
<name>SYH_CHLT2</name>
<sequence length="428" mass="49093">MSNALPKGVFDIFPYVTSPKNLWRNSSLWKRVEHAAHRICNLYGFDEIRTPVFEKTETFLRVGEHSDIVKKEVYTFLDKKGRSLTLRPEGTAAVVRALLDHSADMRKDNKFYYILPMFRYERQQSGRYRQHHQFGLEAIGVRHPLRDAEVLSLLWDFYAAVGLQHMQIHVNFLGGQKTRARYDEALREFFRKDLDRLSPLSQERYHANLLRILDSKEPEDQEFIEKAPSILDYIDDRDLSYFDAVLAQLKALGIPFAINPRLVRGLDYYTDLVFEAVTVVGERSYALGGGGRYDELVAQSGGPSMPAFGFGVGLERVIQTLLEQGNSLSTSTRRLRLIPMDEQADAFCFSWANRLRNLGIATEVDWSHKKPKLSLKDAADQQVSFVCLLGEQELATKQFIVKDMSLHQSFSGAQQDVEQRLVYEVQNA</sequence>
<organism>
    <name type="scientific">Chlamydia trachomatis serovar L2 (strain ATCC VR-902B / DSM 19102 / 434/Bu)</name>
    <dbReference type="NCBI Taxonomy" id="471472"/>
    <lineage>
        <taxon>Bacteria</taxon>
        <taxon>Pseudomonadati</taxon>
        <taxon>Chlamydiota</taxon>
        <taxon>Chlamydiia</taxon>
        <taxon>Chlamydiales</taxon>
        <taxon>Chlamydiaceae</taxon>
        <taxon>Chlamydia/Chlamydophila group</taxon>
        <taxon>Chlamydia</taxon>
    </lineage>
</organism>
<evidence type="ECO:0000255" key="1">
    <source>
        <dbReference type="HAMAP-Rule" id="MF_00127"/>
    </source>
</evidence>
<protein>
    <recommendedName>
        <fullName evidence="1">Histidine--tRNA ligase</fullName>
        <ecNumber evidence="1">6.1.1.21</ecNumber>
    </recommendedName>
    <alternativeName>
        <fullName evidence="1">Histidyl-tRNA synthetase</fullName>
        <shortName evidence="1">HisRS</shortName>
    </alternativeName>
</protein>
<feature type="chain" id="PRO_1000095539" description="Histidine--tRNA ligase">
    <location>
        <begin position="1"/>
        <end position="428"/>
    </location>
</feature>
<gene>
    <name evidence="1" type="primary">hisS</name>
    <name type="ordered locus">CTL0805</name>
</gene>